<proteinExistence type="inferred from homology"/>
<evidence type="ECO:0000255" key="1">
    <source>
        <dbReference type="HAMAP-Rule" id="MF_00689"/>
    </source>
</evidence>
<accession>A2SFU1</accession>
<gene>
    <name evidence="1" type="primary">bpt</name>
    <name type="ordered locus">Mpe_A1468</name>
</gene>
<organism>
    <name type="scientific">Methylibium petroleiphilum (strain ATCC BAA-1232 / LMG 22953 / PM1)</name>
    <dbReference type="NCBI Taxonomy" id="420662"/>
    <lineage>
        <taxon>Bacteria</taxon>
        <taxon>Pseudomonadati</taxon>
        <taxon>Pseudomonadota</taxon>
        <taxon>Betaproteobacteria</taxon>
        <taxon>Burkholderiales</taxon>
        <taxon>Sphaerotilaceae</taxon>
        <taxon>Methylibium</taxon>
    </lineage>
</organism>
<dbReference type="EC" id="2.3.2.29" evidence="1"/>
<dbReference type="EMBL" id="CP000555">
    <property type="protein sequence ID" value="ABM94430.1"/>
    <property type="molecule type" value="Genomic_DNA"/>
</dbReference>
<dbReference type="RefSeq" id="WP_011829067.1">
    <property type="nucleotide sequence ID" value="NC_008825.1"/>
</dbReference>
<dbReference type="SMR" id="A2SFU1"/>
<dbReference type="STRING" id="420662.Mpe_A1468"/>
<dbReference type="KEGG" id="mpt:Mpe_A1468"/>
<dbReference type="eggNOG" id="COG2935">
    <property type="taxonomic scope" value="Bacteria"/>
</dbReference>
<dbReference type="HOGENOM" id="CLU_077607_0_0_4"/>
<dbReference type="Proteomes" id="UP000000366">
    <property type="component" value="Chromosome"/>
</dbReference>
<dbReference type="GO" id="GO:0005737">
    <property type="term" value="C:cytoplasm"/>
    <property type="evidence" value="ECO:0007669"/>
    <property type="project" value="UniProtKB-SubCell"/>
</dbReference>
<dbReference type="GO" id="GO:0004057">
    <property type="term" value="F:arginyl-tRNA--protein transferase activity"/>
    <property type="evidence" value="ECO:0007669"/>
    <property type="project" value="InterPro"/>
</dbReference>
<dbReference type="GO" id="GO:0008914">
    <property type="term" value="F:leucyl-tRNA--protein transferase activity"/>
    <property type="evidence" value="ECO:0007669"/>
    <property type="project" value="UniProtKB-UniRule"/>
</dbReference>
<dbReference type="GO" id="GO:0071596">
    <property type="term" value="P:ubiquitin-dependent protein catabolic process via the N-end rule pathway"/>
    <property type="evidence" value="ECO:0007669"/>
    <property type="project" value="InterPro"/>
</dbReference>
<dbReference type="HAMAP" id="MF_00689">
    <property type="entry name" value="Bpt"/>
    <property type="match status" value="1"/>
</dbReference>
<dbReference type="InterPro" id="IPR016181">
    <property type="entry name" value="Acyl_CoA_acyltransferase"/>
</dbReference>
<dbReference type="InterPro" id="IPR017138">
    <property type="entry name" value="Asp_Glu_LeuTrfase"/>
</dbReference>
<dbReference type="InterPro" id="IPR030700">
    <property type="entry name" value="N-end_Aminoacyl_Trfase"/>
</dbReference>
<dbReference type="InterPro" id="IPR007472">
    <property type="entry name" value="N-end_Aminoacyl_Trfase_C"/>
</dbReference>
<dbReference type="InterPro" id="IPR007471">
    <property type="entry name" value="N-end_Aminoacyl_Trfase_N"/>
</dbReference>
<dbReference type="NCBIfam" id="NF002341">
    <property type="entry name" value="PRK01305.1-1"/>
    <property type="match status" value="1"/>
</dbReference>
<dbReference type="NCBIfam" id="NF002342">
    <property type="entry name" value="PRK01305.1-3"/>
    <property type="match status" value="1"/>
</dbReference>
<dbReference type="NCBIfam" id="NF002346">
    <property type="entry name" value="PRK01305.2-3"/>
    <property type="match status" value="1"/>
</dbReference>
<dbReference type="PANTHER" id="PTHR21367">
    <property type="entry name" value="ARGININE-TRNA-PROTEIN TRANSFERASE 1"/>
    <property type="match status" value="1"/>
</dbReference>
<dbReference type="PANTHER" id="PTHR21367:SF1">
    <property type="entry name" value="ARGINYL-TRNA--PROTEIN TRANSFERASE 1"/>
    <property type="match status" value="1"/>
</dbReference>
<dbReference type="Pfam" id="PF04377">
    <property type="entry name" value="ATE_C"/>
    <property type="match status" value="1"/>
</dbReference>
<dbReference type="Pfam" id="PF04376">
    <property type="entry name" value="ATE_N"/>
    <property type="match status" value="1"/>
</dbReference>
<dbReference type="PIRSF" id="PIRSF037208">
    <property type="entry name" value="ATE_pro_prd"/>
    <property type="match status" value="1"/>
</dbReference>
<dbReference type="SUPFAM" id="SSF55729">
    <property type="entry name" value="Acyl-CoA N-acyltransferases (Nat)"/>
    <property type="match status" value="1"/>
</dbReference>
<feature type="chain" id="PRO_1000045137" description="Aspartate/glutamate leucyltransferase">
    <location>
        <begin position="1"/>
        <end position="256"/>
    </location>
</feature>
<protein>
    <recommendedName>
        <fullName evidence="1">Aspartate/glutamate leucyltransferase</fullName>
        <ecNumber evidence="1">2.3.2.29</ecNumber>
    </recommendedName>
</protein>
<name>BPT_METPP</name>
<reference key="1">
    <citation type="journal article" date="2007" name="J. Bacteriol.">
        <title>Whole-genome analysis of the methyl tert-butyl ether-degrading beta-proteobacterium Methylibium petroleiphilum PM1.</title>
        <authorList>
            <person name="Kane S.R."/>
            <person name="Chakicherla A.Y."/>
            <person name="Chain P.S.G."/>
            <person name="Schmidt R."/>
            <person name="Shin M.W."/>
            <person name="Legler T.C."/>
            <person name="Scow K.M."/>
            <person name="Larimer F.W."/>
            <person name="Lucas S.M."/>
            <person name="Richardson P.M."/>
            <person name="Hristova K.R."/>
        </authorList>
    </citation>
    <scope>NUCLEOTIDE SEQUENCE [LARGE SCALE GENOMIC DNA]</scope>
    <source>
        <strain>ATCC BAA-1232 / LMG 22953 / PM1</strain>
    </source>
</reference>
<keyword id="KW-0012">Acyltransferase</keyword>
<keyword id="KW-0963">Cytoplasm</keyword>
<keyword id="KW-1185">Reference proteome</keyword>
<keyword id="KW-0808">Transferase</keyword>
<comment type="function">
    <text evidence="1">Functions in the N-end rule pathway of protein degradation where it conjugates Leu from its aminoacyl-tRNA to the N-termini of proteins containing an N-terminal aspartate or glutamate.</text>
</comment>
<comment type="catalytic activity">
    <reaction evidence="1">
        <text>N-terminal L-glutamyl-[protein] + L-leucyl-tRNA(Leu) = N-terminal L-leucyl-L-glutamyl-[protein] + tRNA(Leu) + H(+)</text>
        <dbReference type="Rhea" id="RHEA:50412"/>
        <dbReference type="Rhea" id="RHEA-COMP:9613"/>
        <dbReference type="Rhea" id="RHEA-COMP:9622"/>
        <dbReference type="Rhea" id="RHEA-COMP:12664"/>
        <dbReference type="Rhea" id="RHEA-COMP:12668"/>
        <dbReference type="ChEBI" id="CHEBI:15378"/>
        <dbReference type="ChEBI" id="CHEBI:64721"/>
        <dbReference type="ChEBI" id="CHEBI:78442"/>
        <dbReference type="ChEBI" id="CHEBI:78494"/>
        <dbReference type="ChEBI" id="CHEBI:133041"/>
        <dbReference type="EC" id="2.3.2.29"/>
    </reaction>
</comment>
<comment type="catalytic activity">
    <reaction evidence="1">
        <text>N-terminal L-aspartyl-[protein] + L-leucyl-tRNA(Leu) = N-terminal L-leucyl-L-aspartyl-[protein] + tRNA(Leu) + H(+)</text>
        <dbReference type="Rhea" id="RHEA:50420"/>
        <dbReference type="Rhea" id="RHEA-COMP:9613"/>
        <dbReference type="Rhea" id="RHEA-COMP:9622"/>
        <dbReference type="Rhea" id="RHEA-COMP:12669"/>
        <dbReference type="Rhea" id="RHEA-COMP:12674"/>
        <dbReference type="ChEBI" id="CHEBI:15378"/>
        <dbReference type="ChEBI" id="CHEBI:64720"/>
        <dbReference type="ChEBI" id="CHEBI:78442"/>
        <dbReference type="ChEBI" id="CHEBI:78494"/>
        <dbReference type="ChEBI" id="CHEBI:133042"/>
        <dbReference type="EC" id="2.3.2.29"/>
    </reaction>
</comment>
<comment type="subcellular location">
    <subcellularLocation>
        <location evidence="1">Cytoplasm</location>
    </subcellularLocation>
</comment>
<comment type="similarity">
    <text evidence="1">Belongs to the R-transferase family. Bpt subfamily.</text>
</comment>
<sequence>MTHPKELPLASLQFYATAPYPCSYLAGRQARSQVATPSHLIHADTYSGLVANGFRRSGMFTYRPYCDGCRACVPLRVPVAGFQPSRSQRRAWKAHQGLQSRVLRLCFVPEHYQLYLRYQAGRHAGGGMDHDSIDQYTQFLLQSRVNSRLVEFREPAPEGQLGTLKMVSILDILNDGLSAVYTFYEPDPDASYGTYNVLWQIEQTRQLKLPHVYLGYWIGESPKMSYKAQFRPNERLVDGVWQPEPRDETVGSPRQG</sequence>